<proteinExistence type="inferred from homology"/>
<evidence type="ECO:0000255" key="1">
    <source>
        <dbReference type="HAMAP-Rule" id="MF_00472"/>
    </source>
</evidence>
<organism>
    <name type="scientific">Aromatoleum aromaticum (strain DSM 19018 / LMG 30748 / EbN1)</name>
    <name type="common">Azoarcus sp. (strain EbN1)</name>
    <dbReference type="NCBI Taxonomy" id="76114"/>
    <lineage>
        <taxon>Bacteria</taxon>
        <taxon>Pseudomonadati</taxon>
        <taxon>Pseudomonadota</taxon>
        <taxon>Betaproteobacteria</taxon>
        <taxon>Rhodocyclales</taxon>
        <taxon>Rhodocyclaceae</taxon>
        <taxon>Aromatoleum</taxon>
    </lineage>
</organism>
<reference key="1">
    <citation type="journal article" date="2005" name="Arch. Microbiol.">
        <title>The genome sequence of an anaerobic aromatic-degrading denitrifying bacterium, strain EbN1.</title>
        <authorList>
            <person name="Rabus R."/>
            <person name="Kube M."/>
            <person name="Heider J."/>
            <person name="Beck A."/>
            <person name="Heitmann K."/>
            <person name="Widdel F."/>
            <person name="Reinhardt R."/>
        </authorList>
    </citation>
    <scope>NUCLEOTIDE SEQUENCE [LARGE SCALE GENOMIC DNA]</scope>
    <source>
        <strain>DSM 19018 / LMG 30748 / EbN1</strain>
    </source>
</reference>
<protein>
    <recommendedName>
        <fullName evidence="1">Ubiquinone biosynthesis O-methyltransferase</fullName>
    </recommendedName>
    <alternativeName>
        <fullName evidence="1">2-polyprenyl-6-hydroxyphenol methylase</fullName>
        <ecNumber evidence="1">2.1.1.222</ecNumber>
    </alternativeName>
    <alternativeName>
        <fullName evidence="1">3-demethylubiquinone 3-O-methyltransferase</fullName>
        <ecNumber evidence="1">2.1.1.64</ecNumber>
    </alternativeName>
</protein>
<feature type="chain" id="PRO_0000241701" description="Ubiquinone biosynthesis O-methyltransferase">
    <location>
        <begin position="1"/>
        <end position="234"/>
    </location>
</feature>
<feature type="binding site" evidence="1">
    <location>
        <position position="37"/>
    </location>
    <ligand>
        <name>S-adenosyl-L-methionine</name>
        <dbReference type="ChEBI" id="CHEBI:59789"/>
    </ligand>
</feature>
<feature type="binding site" evidence="1">
    <location>
        <position position="56"/>
    </location>
    <ligand>
        <name>S-adenosyl-L-methionine</name>
        <dbReference type="ChEBI" id="CHEBI:59789"/>
    </ligand>
</feature>
<feature type="binding site" evidence="1">
    <location>
        <position position="77"/>
    </location>
    <ligand>
        <name>S-adenosyl-L-methionine</name>
        <dbReference type="ChEBI" id="CHEBI:59789"/>
    </ligand>
</feature>
<feature type="binding site" evidence="1">
    <location>
        <position position="121"/>
    </location>
    <ligand>
        <name>S-adenosyl-L-methionine</name>
        <dbReference type="ChEBI" id="CHEBI:59789"/>
    </ligand>
</feature>
<accession>Q5P7U3</accession>
<comment type="function">
    <text evidence="1">O-methyltransferase that catalyzes the 2 O-methylation steps in the ubiquinone biosynthetic pathway.</text>
</comment>
<comment type="catalytic activity">
    <reaction evidence="1">
        <text>a 3-demethylubiquinol + S-adenosyl-L-methionine = a ubiquinol + S-adenosyl-L-homocysteine + H(+)</text>
        <dbReference type="Rhea" id="RHEA:44380"/>
        <dbReference type="Rhea" id="RHEA-COMP:9566"/>
        <dbReference type="Rhea" id="RHEA-COMP:10914"/>
        <dbReference type="ChEBI" id="CHEBI:15378"/>
        <dbReference type="ChEBI" id="CHEBI:17976"/>
        <dbReference type="ChEBI" id="CHEBI:57856"/>
        <dbReference type="ChEBI" id="CHEBI:59789"/>
        <dbReference type="ChEBI" id="CHEBI:84422"/>
        <dbReference type="EC" id="2.1.1.64"/>
    </reaction>
</comment>
<comment type="catalytic activity">
    <reaction evidence="1">
        <text>a 3-(all-trans-polyprenyl)benzene-1,2-diol + S-adenosyl-L-methionine = a 2-methoxy-6-(all-trans-polyprenyl)phenol + S-adenosyl-L-homocysteine + H(+)</text>
        <dbReference type="Rhea" id="RHEA:31411"/>
        <dbReference type="Rhea" id="RHEA-COMP:9550"/>
        <dbReference type="Rhea" id="RHEA-COMP:9551"/>
        <dbReference type="ChEBI" id="CHEBI:15378"/>
        <dbReference type="ChEBI" id="CHEBI:57856"/>
        <dbReference type="ChEBI" id="CHEBI:59789"/>
        <dbReference type="ChEBI" id="CHEBI:62729"/>
        <dbReference type="ChEBI" id="CHEBI:62731"/>
        <dbReference type="EC" id="2.1.1.222"/>
    </reaction>
</comment>
<comment type="pathway">
    <text evidence="1">Cofactor biosynthesis; ubiquinone biosynthesis.</text>
</comment>
<comment type="similarity">
    <text evidence="1">Belongs to the methyltransferase superfamily. UbiG/COQ3 family.</text>
</comment>
<dbReference type="EC" id="2.1.1.222" evidence="1"/>
<dbReference type="EC" id="2.1.1.64" evidence="1"/>
<dbReference type="EMBL" id="CR555306">
    <property type="protein sequence ID" value="CAI06618.1"/>
    <property type="molecule type" value="Genomic_DNA"/>
</dbReference>
<dbReference type="RefSeq" id="WP_011236348.1">
    <property type="nucleotide sequence ID" value="NC_006513.1"/>
</dbReference>
<dbReference type="SMR" id="Q5P7U3"/>
<dbReference type="STRING" id="76114.ebA914"/>
<dbReference type="KEGG" id="eba:ebA914"/>
<dbReference type="eggNOG" id="COG2227">
    <property type="taxonomic scope" value="Bacteria"/>
</dbReference>
<dbReference type="HOGENOM" id="CLU_042432_5_0_4"/>
<dbReference type="OrthoDB" id="9801538at2"/>
<dbReference type="UniPathway" id="UPA00232"/>
<dbReference type="Proteomes" id="UP000006552">
    <property type="component" value="Chromosome"/>
</dbReference>
<dbReference type="GO" id="GO:0102208">
    <property type="term" value="F:2-polyprenyl-6-hydroxyphenol methylase activity"/>
    <property type="evidence" value="ECO:0007669"/>
    <property type="project" value="UniProtKB-EC"/>
</dbReference>
<dbReference type="GO" id="GO:0061542">
    <property type="term" value="F:3-demethylubiquinol 3-O-methyltransferase activity"/>
    <property type="evidence" value="ECO:0007669"/>
    <property type="project" value="UniProtKB-UniRule"/>
</dbReference>
<dbReference type="GO" id="GO:0010420">
    <property type="term" value="F:polyprenyldihydroxybenzoate methyltransferase activity"/>
    <property type="evidence" value="ECO:0007669"/>
    <property type="project" value="InterPro"/>
</dbReference>
<dbReference type="GO" id="GO:0032259">
    <property type="term" value="P:methylation"/>
    <property type="evidence" value="ECO:0007669"/>
    <property type="project" value="UniProtKB-KW"/>
</dbReference>
<dbReference type="CDD" id="cd02440">
    <property type="entry name" value="AdoMet_MTases"/>
    <property type="match status" value="1"/>
</dbReference>
<dbReference type="FunFam" id="3.40.50.150:FF:000028">
    <property type="entry name" value="Ubiquinone biosynthesis O-methyltransferase"/>
    <property type="match status" value="1"/>
</dbReference>
<dbReference type="Gene3D" id="3.40.50.150">
    <property type="entry name" value="Vaccinia Virus protein VP39"/>
    <property type="match status" value="1"/>
</dbReference>
<dbReference type="HAMAP" id="MF_00472">
    <property type="entry name" value="UbiG"/>
    <property type="match status" value="1"/>
</dbReference>
<dbReference type="InterPro" id="IPR029063">
    <property type="entry name" value="SAM-dependent_MTases_sf"/>
</dbReference>
<dbReference type="InterPro" id="IPR010233">
    <property type="entry name" value="UbiG_MeTrfase"/>
</dbReference>
<dbReference type="NCBIfam" id="TIGR01983">
    <property type="entry name" value="UbiG"/>
    <property type="match status" value="1"/>
</dbReference>
<dbReference type="PANTHER" id="PTHR43464">
    <property type="entry name" value="METHYLTRANSFERASE"/>
    <property type="match status" value="1"/>
</dbReference>
<dbReference type="PANTHER" id="PTHR43464:SF19">
    <property type="entry name" value="UBIQUINONE BIOSYNTHESIS O-METHYLTRANSFERASE, MITOCHONDRIAL"/>
    <property type="match status" value="1"/>
</dbReference>
<dbReference type="Pfam" id="PF13489">
    <property type="entry name" value="Methyltransf_23"/>
    <property type="match status" value="1"/>
</dbReference>
<dbReference type="SUPFAM" id="SSF53335">
    <property type="entry name" value="S-adenosyl-L-methionine-dependent methyltransferases"/>
    <property type="match status" value="1"/>
</dbReference>
<keyword id="KW-0489">Methyltransferase</keyword>
<keyword id="KW-1185">Reference proteome</keyword>
<keyword id="KW-0949">S-adenosyl-L-methionine</keyword>
<keyword id="KW-0808">Transferase</keyword>
<keyword id="KW-0831">Ubiquinone biosynthesis</keyword>
<gene>
    <name evidence="1" type="primary">ubiG</name>
    <name type="ordered locus">AZOSEA04960</name>
    <name type="ORF">ebA914</name>
</gene>
<name>UBIG_AROAE</name>
<sequence length="234" mass="25777">MNMNADPAELQKFSELAHRWWDTTSEFKPLHEINPLRLDWIDRNAGLAGKRVLDIGCGGGILSESMAAAGAHVTGIDLSEKALGVARLHLFESGQKVDYHHASAEEFAAQHAGEFDIVTCMEMLEHVPDPASTVAACAQLVRPGGQVFFSTINRNFKAYLFAVLGAEYILKLLPRGTHDYVKFIRPSELARYCRQAGLETAELLGMSYNPLTQVYSLGNDTDVNYLVHAKQAVS</sequence>